<comment type="function">
    <text evidence="1">Cell surface receptor, which is involved in signal transduction processes. Recruits PTPN11/SHP-2 to the cell membrane and is a putative substrate of PTPN11/SHP-2. Is a major receptor for concanavalin-A (ConA) and is involved in cellular signaling induced by ConA, which probably includes Src family tyrosine-protein kinases. May be involved in regulation of integrin-mediated cell motility (By similarity).</text>
</comment>
<comment type="subunit">
    <text evidence="1">Interacts with phosphorylated PTPN11/SHP-2.</text>
</comment>
<comment type="subcellular location">
    <subcellularLocation>
        <location evidence="6">Membrane</location>
        <topology evidence="6">Single-pass type I membrane protein</topology>
    </subcellularLocation>
</comment>
<comment type="domain">
    <text>Contains 2 copies of a cytoplasmic motif that is referred to as the immunoreceptor tyrosine-based inhibitor motif (ITIM). This motif is involved in modulation of cellular responses. The phosphorylated ITIM motif can bind the SH2 domain of several SH2-containing phosphatases.</text>
</comment>
<comment type="PTM">
    <text evidence="1">Phosphorylated on tyrosine residues upon stimulation with pervanadate and concanavalin-A (ConA). Phosphorylation at Tyr-241 and Tyr-263 is required for interaction with PTPN11/SHP-2. Dephosphorylated by PTPN11/SHP-2 (in vitro) (By similarity).</text>
</comment>
<comment type="PTM">
    <text evidence="1">N-glycosylated.</text>
</comment>
<comment type="similarity">
    <text evidence="6">Belongs to the myelin P0 protein family.</text>
</comment>
<accession>Q32PI9</accession>
<accession>A2SZV4</accession>
<proteinExistence type="evidence at transcript level"/>
<dbReference type="EMBL" id="DQ375557">
    <property type="protein sequence ID" value="ABD42945.1"/>
    <property type="molecule type" value="mRNA"/>
</dbReference>
<dbReference type="EMBL" id="BC108099">
    <property type="protein sequence ID" value="AAI08100.1"/>
    <property type="molecule type" value="mRNA"/>
</dbReference>
<dbReference type="RefSeq" id="NP_001069626.1">
    <property type="nucleotide sequence ID" value="NM_001076158.1"/>
</dbReference>
<dbReference type="SMR" id="Q32PI9"/>
<dbReference type="BioGRID" id="195954">
    <property type="interactions" value="1"/>
</dbReference>
<dbReference type="FunCoup" id="Q32PI9">
    <property type="interactions" value="1738"/>
</dbReference>
<dbReference type="STRING" id="9913.ENSBTAP00000003653"/>
<dbReference type="GlyCosmos" id="Q32PI9">
    <property type="glycosylation" value="3 sites, No reported glycans"/>
</dbReference>
<dbReference type="GlyGen" id="Q32PI9">
    <property type="glycosylation" value="3 sites"/>
</dbReference>
<dbReference type="PaxDb" id="9913-ENSBTAP00000003653"/>
<dbReference type="Ensembl" id="ENSBTAT00000003653.5">
    <property type="protein sequence ID" value="ENSBTAP00000003653.4"/>
    <property type="gene ID" value="ENSBTAG00000002823.6"/>
</dbReference>
<dbReference type="GeneID" id="539387"/>
<dbReference type="KEGG" id="bta:539387"/>
<dbReference type="CTD" id="9019"/>
<dbReference type="VEuPathDB" id="HostDB:ENSBTAG00000002823"/>
<dbReference type="VGNC" id="VGNC:31592">
    <property type="gene designation" value="MPZL1"/>
</dbReference>
<dbReference type="eggNOG" id="ENOG502QUEQ">
    <property type="taxonomic scope" value="Eukaryota"/>
</dbReference>
<dbReference type="GeneTree" id="ENSGT01030000234556"/>
<dbReference type="HOGENOM" id="CLU_090350_3_0_1"/>
<dbReference type="InParanoid" id="Q32PI9"/>
<dbReference type="OMA" id="RDYTGCN"/>
<dbReference type="OrthoDB" id="8831214at2759"/>
<dbReference type="TreeFam" id="TF331728"/>
<dbReference type="Proteomes" id="UP000009136">
    <property type="component" value="Chromosome 3"/>
</dbReference>
<dbReference type="Bgee" id="ENSBTAG00000002823">
    <property type="expression patterns" value="Expressed in myometrium and 103 other cell types or tissues"/>
</dbReference>
<dbReference type="GO" id="GO:0005886">
    <property type="term" value="C:plasma membrane"/>
    <property type="evidence" value="ECO:0000318"/>
    <property type="project" value="GO_Central"/>
</dbReference>
<dbReference type="CDD" id="cd05715">
    <property type="entry name" value="IgV_P0-like"/>
    <property type="match status" value="1"/>
</dbReference>
<dbReference type="FunFam" id="2.60.40.10:FF:000193">
    <property type="entry name" value="Myelin protein zero-like 1 like"/>
    <property type="match status" value="1"/>
</dbReference>
<dbReference type="Gene3D" id="2.60.40.10">
    <property type="entry name" value="Immunoglobulins"/>
    <property type="match status" value="1"/>
</dbReference>
<dbReference type="InterPro" id="IPR007110">
    <property type="entry name" value="Ig-like_dom"/>
</dbReference>
<dbReference type="InterPro" id="IPR036179">
    <property type="entry name" value="Ig-like_dom_sf"/>
</dbReference>
<dbReference type="InterPro" id="IPR013783">
    <property type="entry name" value="Ig-like_fold"/>
</dbReference>
<dbReference type="InterPro" id="IPR003599">
    <property type="entry name" value="Ig_sub"/>
</dbReference>
<dbReference type="InterPro" id="IPR013106">
    <property type="entry name" value="Ig_V-set"/>
</dbReference>
<dbReference type="InterPro" id="IPR000920">
    <property type="entry name" value="Myelin_P0-rel"/>
</dbReference>
<dbReference type="PANTHER" id="PTHR13869">
    <property type="entry name" value="MYELIN P0 RELATED"/>
    <property type="match status" value="1"/>
</dbReference>
<dbReference type="PANTHER" id="PTHR13869:SF19">
    <property type="entry name" value="MYELIN PROTEIN ZERO-LIKE PROTEIN 1"/>
    <property type="match status" value="1"/>
</dbReference>
<dbReference type="Pfam" id="PF07686">
    <property type="entry name" value="V-set"/>
    <property type="match status" value="1"/>
</dbReference>
<dbReference type="PRINTS" id="PR00213">
    <property type="entry name" value="MYELINP0"/>
</dbReference>
<dbReference type="SMART" id="SM00409">
    <property type="entry name" value="IG"/>
    <property type="match status" value="1"/>
</dbReference>
<dbReference type="SMART" id="SM00406">
    <property type="entry name" value="IGv"/>
    <property type="match status" value="1"/>
</dbReference>
<dbReference type="SUPFAM" id="SSF48726">
    <property type="entry name" value="Immunoglobulin"/>
    <property type="match status" value="1"/>
</dbReference>
<dbReference type="PROSITE" id="PS50835">
    <property type="entry name" value="IG_LIKE"/>
    <property type="match status" value="1"/>
</dbReference>
<organism>
    <name type="scientific">Bos taurus</name>
    <name type="common">Bovine</name>
    <dbReference type="NCBI Taxonomy" id="9913"/>
    <lineage>
        <taxon>Eukaryota</taxon>
        <taxon>Metazoa</taxon>
        <taxon>Chordata</taxon>
        <taxon>Craniata</taxon>
        <taxon>Vertebrata</taxon>
        <taxon>Euteleostomi</taxon>
        <taxon>Mammalia</taxon>
        <taxon>Eutheria</taxon>
        <taxon>Laurasiatheria</taxon>
        <taxon>Artiodactyla</taxon>
        <taxon>Ruminantia</taxon>
        <taxon>Pecora</taxon>
        <taxon>Bovidae</taxon>
        <taxon>Bovinae</taxon>
        <taxon>Bos</taxon>
    </lineage>
</organism>
<feature type="signal peptide" evidence="3">
    <location>
        <begin position="1"/>
        <end position="35"/>
    </location>
</feature>
<feature type="chain" id="PRO_0000244395" description="Myelin protein zero-like protein 1">
    <location>
        <begin position="36"/>
        <end position="269"/>
    </location>
</feature>
<feature type="topological domain" description="Extracellular" evidence="3">
    <location>
        <begin position="36"/>
        <end position="162"/>
    </location>
</feature>
<feature type="transmembrane region" description="Helical" evidence="3">
    <location>
        <begin position="163"/>
        <end position="183"/>
    </location>
</feature>
<feature type="topological domain" description="Cytoplasmic" evidence="3">
    <location>
        <begin position="184"/>
        <end position="269"/>
    </location>
</feature>
<feature type="domain" description="Ig-like V-type">
    <location>
        <begin position="36"/>
        <end position="146"/>
    </location>
</feature>
<feature type="region of interest" description="Disordered" evidence="5">
    <location>
        <begin position="202"/>
        <end position="238"/>
    </location>
</feature>
<feature type="short sequence motif" description="ITIM motif 1">
    <location>
        <begin position="239"/>
        <end position="244"/>
    </location>
</feature>
<feature type="short sequence motif" description="ITIM motif 2">
    <location>
        <begin position="261"/>
        <end position="266"/>
    </location>
</feature>
<feature type="compositionally biased region" description="Polar residues" evidence="5">
    <location>
        <begin position="203"/>
        <end position="213"/>
    </location>
</feature>
<feature type="modified residue" description="Phosphoserine" evidence="2">
    <location>
        <position position="206"/>
    </location>
</feature>
<feature type="modified residue" description="Phosphoserine" evidence="2">
    <location>
        <position position="210"/>
    </location>
</feature>
<feature type="modified residue" description="Phosphoserine" evidence="2">
    <location>
        <position position="219"/>
    </location>
</feature>
<feature type="modified residue" description="Phosphoserine" evidence="2">
    <location>
        <position position="221"/>
    </location>
</feature>
<feature type="modified residue" description="Phosphotyrosine" evidence="2">
    <location>
        <position position="241"/>
    </location>
</feature>
<feature type="modified residue" description="Phosphoserine" evidence="2">
    <location>
        <position position="260"/>
    </location>
</feature>
<feature type="modified residue" description="Phosphotyrosine" evidence="2">
    <location>
        <position position="263"/>
    </location>
</feature>
<feature type="glycosylation site" description="N-linked (GlcNAc...) asparagine" evidence="3">
    <location>
        <position position="50"/>
    </location>
</feature>
<feature type="glycosylation site" description="N-linked (GlcNAc...) asparagine" evidence="3">
    <location>
        <position position="64"/>
    </location>
</feature>
<feature type="glycosylation site" description="N-linked (GlcNAc...) asparagine" evidence="3">
    <location>
        <position position="130"/>
    </location>
</feature>
<feature type="disulfide bond" evidence="4">
    <location>
        <begin position="58"/>
        <end position="135"/>
    </location>
</feature>
<keyword id="KW-1015">Disulfide bond</keyword>
<keyword id="KW-0325">Glycoprotein</keyword>
<keyword id="KW-0393">Immunoglobulin domain</keyword>
<keyword id="KW-0472">Membrane</keyword>
<keyword id="KW-0597">Phosphoprotein</keyword>
<keyword id="KW-1185">Reference proteome</keyword>
<keyword id="KW-0732">Signal</keyword>
<keyword id="KW-0812">Transmembrane</keyword>
<keyword id="KW-1133">Transmembrane helix</keyword>
<name>MPZL1_BOVIN</name>
<protein>
    <recommendedName>
        <fullName>Myelin protein zero-like protein 1</fullName>
    </recommendedName>
</protein>
<evidence type="ECO:0000250" key="1"/>
<evidence type="ECO:0000250" key="2">
    <source>
        <dbReference type="UniProtKB" id="O95297"/>
    </source>
</evidence>
<evidence type="ECO:0000255" key="3"/>
<evidence type="ECO:0000255" key="4">
    <source>
        <dbReference type="PROSITE-ProRule" id="PRU00114"/>
    </source>
</evidence>
<evidence type="ECO:0000256" key="5">
    <source>
        <dbReference type="SAM" id="MobiDB-lite"/>
    </source>
</evidence>
<evidence type="ECO:0000305" key="6"/>
<sequence length="269" mass="29314">MAAPAGAGALIASPDRRRCLWSVLAAALGLLTYGVSALEVYTPKEIFVANGTQGKLTCKFKSTNTTGTLTSVSWSFQPEGTDTTVSFFHYSQGQVYAGNYPPFKDRVSWAGDLDKKDASINIENMQFIHNGTYICDVKNPPDIVVQPGHIRLYVVEKEILPAFPVWVVVGIVTAVVLGLTLLITMILAVIYRRRNSKRDYAGCNTSENVSPVKQVSRKSPSDTEGLVKSLPSGSHQGPVIYAQLDHSGGHHSDRINKSESVVYADIRKN</sequence>
<reference key="1">
    <citation type="submission" date="2006-01" db="EMBL/GenBank/DDBJ databases">
        <authorList>
            <person name="Kusano K."/>
        </authorList>
    </citation>
    <scope>NUCLEOTIDE SEQUENCE [MRNA]</scope>
</reference>
<reference key="2">
    <citation type="submission" date="2005-10" db="EMBL/GenBank/DDBJ databases">
        <authorList>
            <consortium name="NIH - Mammalian Gene Collection (MGC) project"/>
        </authorList>
    </citation>
    <scope>NUCLEOTIDE SEQUENCE [LARGE SCALE MRNA]</scope>
    <source>
        <strain>Crossbred X Angus</strain>
        <tissue>Liver</tissue>
    </source>
</reference>
<gene>
    <name type="primary">MPZL1</name>
</gene>